<gene>
    <name type="ordered locus">BT9727_1080</name>
</gene>
<proteinExistence type="inferred from homology"/>
<dbReference type="EMBL" id="AE017355">
    <property type="protein sequence ID" value="AAT63074.1"/>
    <property type="molecule type" value="Genomic_DNA"/>
</dbReference>
<dbReference type="RefSeq" id="WP_000966134.1">
    <property type="nucleotide sequence ID" value="NC_005957.1"/>
</dbReference>
<dbReference type="RefSeq" id="YP_035417.1">
    <property type="nucleotide sequence ID" value="NC_005957.1"/>
</dbReference>
<dbReference type="SMR" id="Q6HM04"/>
<dbReference type="KEGG" id="btk:BT9727_1080"/>
<dbReference type="PATRIC" id="fig|281309.8.peg.1137"/>
<dbReference type="HOGENOM" id="CLU_1101152_0_0_9"/>
<dbReference type="Proteomes" id="UP000001301">
    <property type="component" value="Chromosome"/>
</dbReference>
<dbReference type="HAMAP" id="MF_01860">
    <property type="entry name" value="UPF0736"/>
    <property type="match status" value="1"/>
</dbReference>
<dbReference type="InterPro" id="IPR020909">
    <property type="entry name" value="UPF0736"/>
</dbReference>
<dbReference type="Pfam" id="PF12227">
    <property type="entry name" value="DUF3603"/>
    <property type="match status" value="1"/>
</dbReference>
<protein>
    <recommendedName>
        <fullName evidence="1">UPF0736 protein BT9727_1080</fullName>
    </recommendedName>
</protein>
<accession>Q6HM04</accession>
<evidence type="ECO:0000255" key="1">
    <source>
        <dbReference type="HAMAP-Rule" id="MF_01860"/>
    </source>
</evidence>
<sequence length="248" mass="30052">MLYLHDVWVNWFEGEENGYNVCHFYEWRKDDTIELLDQVPLLKVDSTLYHYIENELLELPQKLLEDVHHKAYIRKNHERLQQEYCFVVTDGKGIIAIDTIGYNVPIRKSRLIPRQEQMVYEMVENVQAEKYEFQVEEMEKEHHILSPSPFVMNGLTRKERQLKQLLFMALDQLHTTKNTAEIRYWFTEWDPSAYGMVQHMEFEDIWAKLYDEAKTGWSEKHEQLCERLVKGQPFFEKLWEMENEQKVN</sequence>
<reference key="1">
    <citation type="journal article" date="2006" name="J. Bacteriol.">
        <title>Pathogenomic sequence analysis of Bacillus cereus and Bacillus thuringiensis isolates closely related to Bacillus anthracis.</title>
        <authorList>
            <person name="Han C.S."/>
            <person name="Xie G."/>
            <person name="Challacombe J.F."/>
            <person name="Altherr M.R."/>
            <person name="Bhotika S.S."/>
            <person name="Bruce D."/>
            <person name="Campbell C.S."/>
            <person name="Campbell M.L."/>
            <person name="Chen J."/>
            <person name="Chertkov O."/>
            <person name="Cleland C."/>
            <person name="Dimitrijevic M."/>
            <person name="Doggett N.A."/>
            <person name="Fawcett J.J."/>
            <person name="Glavina T."/>
            <person name="Goodwin L.A."/>
            <person name="Hill K.K."/>
            <person name="Hitchcock P."/>
            <person name="Jackson P.J."/>
            <person name="Keim P."/>
            <person name="Kewalramani A.R."/>
            <person name="Longmire J."/>
            <person name="Lucas S."/>
            <person name="Malfatti S."/>
            <person name="McMurry K."/>
            <person name="Meincke L.J."/>
            <person name="Misra M."/>
            <person name="Moseman B.L."/>
            <person name="Mundt M."/>
            <person name="Munk A.C."/>
            <person name="Okinaka R.T."/>
            <person name="Parson-Quintana B."/>
            <person name="Reilly L.P."/>
            <person name="Richardson P."/>
            <person name="Robinson D.L."/>
            <person name="Rubin E."/>
            <person name="Saunders E."/>
            <person name="Tapia R."/>
            <person name="Tesmer J.G."/>
            <person name="Thayer N."/>
            <person name="Thompson L.S."/>
            <person name="Tice H."/>
            <person name="Ticknor L.O."/>
            <person name="Wills P.L."/>
            <person name="Brettin T.S."/>
            <person name="Gilna P."/>
        </authorList>
    </citation>
    <scope>NUCLEOTIDE SEQUENCE [LARGE SCALE GENOMIC DNA]</scope>
    <source>
        <strain>97-27</strain>
    </source>
</reference>
<name>Y1080_BACHK</name>
<comment type="similarity">
    <text evidence="1">Belongs to the UPF0736 family.</text>
</comment>
<feature type="chain" id="PRO_0000369149" description="UPF0736 protein BT9727_1080">
    <location>
        <begin position="1"/>
        <end position="248"/>
    </location>
</feature>
<organism>
    <name type="scientific">Bacillus thuringiensis subsp. konkukian (strain 97-27)</name>
    <dbReference type="NCBI Taxonomy" id="281309"/>
    <lineage>
        <taxon>Bacteria</taxon>
        <taxon>Bacillati</taxon>
        <taxon>Bacillota</taxon>
        <taxon>Bacilli</taxon>
        <taxon>Bacillales</taxon>
        <taxon>Bacillaceae</taxon>
        <taxon>Bacillus</taxon>
        <taxon>Bacillus cereus group</taxon>
    </lineage>
</organism>